<feature type="transit peptide" description="Chloroplast" evidence="2">
    <location>
        <begin position="1"/>
        <end position="67"/>
    </location>
</feature>
<feature type="chain" id="PRO_0000007806" description="Photosystem II 22 kDa protein, chloroplastic">
    <location>
        <begin position="68"/>
        <end position="276"/>
    </location>
</feature>
<feature type="transmembrane region" description="Helical" evidence="2">
    <location>
        <begin position="106"/>
        <end position="126"/>
    </location>
</feature>
<feature type="transmembrane region" description="Helical" evidence="2">
    <location>
        <begin position="140"/>
        <end position="160"/>
    </location>
</feature>
<feature type="transmembrane region" description="Helical" evidence="2">
    <location>
        <begin position="207"/>
        <end position="227"/>
    </location>
</feature>
<feature type="transmembrane region" description="Helical" evidence="2">
    <location>
        <begin position="242"/>
        <end position="262"/>
    </location>
</feature>
<feature type="repeat" description="1">
    <location>
        <begin position="62"/>
        <end position="168"/>
    </location>
</feature>
<feature type="repeat" description="2">
    <location>
        <begin position="169"/>
        <end position="276"/>
    </location>
</feature>
<organism>
    <name type="scientific">Solanum lycopersicum</name>
    <name type="common">Tomato</name>
    <name type="synonym">Lycopersicon esculentum</name>
    <dbReference type="NCBI Taxonomy" id="4081"/>
    <lineage>
        <taxon>Eukaryota</taxon>
        <taxon>Viridiplantae</taxon>
        <taxon>Streptophyta</taxon>
        <taxon>Embryophyta</taxon>
        <taxon>Tracheophyta</taxon>
        <taxon>Spermatophyta</taxon>
        <taxon>Magnoliopsida</taxon>
        <taxon>eudicotyledons</taxon>
        <taxon>Gunneridae</taxon>
        <taxon>Pentapetalae</taxon>
        <taxon>asterids</taxon>
        <taxon>lamiids</taxon>
        <taxon>Solanales</taxon>
        <taxon>Solanaceae</taxon>
        <taxon>Solanoideae</taxon>
        <taxon>Solaneae</taxon>
        <taxon>Solanum</taxon>
        <taxon>Solanum subgen. Lycopersicon</taxon>
    </lineage>
</organism>
<reference key="1">
    <citation type="journal article" date="1994" name="Plant Physiol.">
        <title>Nucleotide sequence of a tomato psbS gene.</title>
        <authorList>
            <person name="Wallbraun M."/>
            <person name="Kim S."/>
            <person name="Green B.R."/>
            <person name="Piechulla B."/>
            <person name="Pichersky E."/>
        </authorList>
    </citation>
    <scope>NUCLEOTIDE SEQUENCE [GENOMIC DNA]</scope>
    <source>
        <tissue>Leaf</tissue>
    </source>
</reference>
<gene>
    <name type="primary">PSBS</name>
</gene>
<evidence type="ECO:0000250" key="1"/>
<evidence type="ECO:0000255" key="2"/>
<evidence type="ECO:0000305" key="3"/>
<sequence length="276" mass="29268">MAQTMLLTANAKVDLRSKESLVERLKPKPLSSLFLPSLPLRFSSSSTNASSSKFTSTTVALFKSKAKAPPKKVAPPKEKQKVEDGIFGTSGGIGFTKQNELFVGRVAMIGFAASLLGEAITGKGILAQLNLETGIPIYEAEPLLLFFILFNLLGAIGALGDRGKFVDDPTPPTGLEKAVIPPGKSFKSALGLSEGGPLFGFTKANELFVGRLAQLGIAFSIIGEIITGKGALAQLNFETGVPINEIEPLLLFNIAFFFFAAINPGTGKFITDEEED</sequence>
<comment type="function">
    <text evidence="1">Seems to be involved in non-photochemical quenching, a process maintains the balance between dissipation and utilization of light energy to minimize generation of oxidizing molecules, thereby protecting the plant against photo-oxidative damage.</text>
</comment>
<comment type="subcellular location">
    <subcellularLocation>
        <location evidence="1">Plastid</location>
        <location evidence="1">Chloroplast thylakoid membrane</location>
        <topology evidence="1">Multi-pass membrane protein</topology>
    </subcellularLocation>
</comment>
<comment type="similarity">
    <text evidence="3">Belongs to the ELIP/psbS family.</text>
</comment>
<protein>
    <recommendedName>
        <fullName>Photosystem II 22 kDa protein, chloroplastic</fullName>
    </recommendedName>
    <alternativeName>
        <fullName>CP22</fullName>
    </alternativeName>
</protein>
<name>PSBS_SOLLC</name>
<keyword id="KW-0150">Chloroplast</keyword>
<keyword id="KW-0472">Membrane</keyword>
<keyword id="KW-0602">Photosynthesis</keyword>
<keyword id="KW-0604">Photosystem II</keyword>
<keyword id="KW-0934">Plastid</keyword>
<keyword id="KW-1185">Reference proteome</keyword>
<keyword id="KW-0677">Repeat</keyword>
<keyword id="KW-0793">Thylakoid</keyword>
<keyword id="KW-0809">Transit peptide</keyword>
<keyword id="KW-0812">Transmembrane</keyword>
<keyword id="KW-1133">Transmembrane helix</keyword>
<dbReference type="EMBL" id="U04336">
    <property type="protein sequence ID" value="AAA63649.1"/>
    <property type="molecule type" value="Genomic_DNA"/>
</dbReference>
<dbReference type="PIR" id="T06331">
    <property type="entry name" value="T06331"/>
</dbReference>
<dbReference type="RefSeq" id="NP_001296186.1">
    <property type="nucleotide sequence ID" value="NM_001309257.1"/>
</dbReference>
<dbReference type="SMR" id="P54773"/>
<dbReference type="FunCoup" id="P54773">
    <property type="interactions" value="1379"/>
</dbReference>
<dbReference type="STRING" id="4081.P54773"/>
<dbReference type="PaxDb" id="4081-Solyc06g060340.2.1"/>
<dbReference type="EnsemblPlants" id="Solyc06g060340.3.1">
    <property type="protein sequence ID" value="Solyc06g060340.3.1"/>
    <property type="gene ID" value="Solyc06g060340.3"/>
</dbReference>
<dbReference type="GeneID" id="101260830"/>
<dbReference type="Gramene" id="Solyc06g060340.3.1">
    <property type="protein sequence ID" value="Solyc06g060340.3.1"/>
    <property type="gene ID" value="Solyc06g060340.3"/>
</dbReference>
<dbReference type="KEGG" id="sly:101260830"/>
<dbReference type="eggNOG" id="ENOG502QTMT">
    <property type="taxonomic scope" value="Eukaryota"/>
</dbReference>
<dbReference type="HOGENOM" id="CLU_090803_0_0_1"/>
<dbReference type="InParanoid" id="P54773"/>
<dbReference type="OMA" id="NAAQISW"/>
<dbReference type="OrthoDB" id="48883at2759"/>
<dbReference type="PhylomeDB" id="P54773"/>
<dbReference type="Proteomes" id="UP000004994">
    <property type="component" value="Chromosome 6"/>
</dbReference>
<dbReference type="GO" id="GO:0009535">
    <property type="term" value="C:chloroplast thylakoid membrane"/>
    <property type="evidence" value="ECO:0000318"/>
    <property type="project" value="GO_Central"/>
</dbReference>
<dbReference type="GO" id="GO:0009523">
    <property type="term" value="C:photosystem II"/>
    <property type="evidence" value="ECO:0007669"/>
    <property type="project" value="UniProtKB-KW"/>
</dbReference>
<dbReference type="GO" id="GO:0015979">
    <property type="term" value="P:photosynthesis"/>
    <property type="evidence" value="ECO:0007669"/>
    <property type="project" value="UniProtKB-KW"/>
</dbReference>
<dbReference type="FunFam" id="1.10.3460.10:FF:000008">
    <property type="entry name" value="Photosystem II 22 kDa protein, chloroplastic"/>
    <property type="match status" value="2"/>
</dbReference>
<dbReference type="Gene3D" id="1.10.3460.10">
    <property type="entry name" value="Chlorophyll a/b binding protein domain"/>
    <property type="match status" value="2"/>
</dbReference>
<dbReference type="InterPro" id="IPR022796">
    <property type="entry name" value="Chloroa_b-bind"/>
</dbReference>
<dbReference type="PANTHER" id="PTHR14154">
    <property type="entry name" value="UPF0041 BRAIN PROTEIN 44-RELATED"/>
    <property type="match status" value="1"/>
</dbReference>
<dbReference type="Pfam" id="PF00504">
    <property type="entry name" value="Chloroa_b-bind"/>
    <property type="match status" value="1"/>
</dbReference>
<dbReference type="SUPFAM" id="SSF103511">
    <property type="entry name" value="Chlorophyll a-b binding protein"/>
    <property type="match status" value="1"/>
</dbReference>
<proteinExistence type="inferred from homology"/>
<accession>P54773</accession>